<sequence>MPRVKGGTVTRKRRKKILKLAKGYRGAKHLLFKSANTQVMVSYRYAFRDRRQRKRDFRKLWIARINAAARMNDMSYSQLMHGLRVAEIDMNRKMLADLAVNDAAAFTSVVEAAKAALNK</sequence>
<organism>
    <name type="scientific">Latilactobacillus sakei subsp. sakei (strain 23K)</name>
    <name type="common">Lactobacillus sakei subsp. sakei</name>
    <dbReference type="NCBI Taxonomy" id="314315"/>
    <lineage>
        <taxon>Bacteria</taxon>
        <taxon>Bacillati</taxon>
        <taxon>Bacillota</taxon>
        <taxon>Bacilli</taxon>
        <taxon>Lactobacillales</taxon>
        <taxon>Lactobacillaceae</taxon>
        <taxon>Latilactobacillus</taxon>
    </lineage>
</organism>
<reference key="1">
    <citation type="journal article" date="2005" name="Nat. Biotechnol.">
        <title>The complete genome sequence of the meat-borne lactic acid bacterium Lactobacillus sakei 23K.</title>
        <authorList>
            <person name="Chaillou S."/>
            <person name="Champomier-Verges M.-C."/>
            <person name="Cornet M."/>
            <person name="Crutz-Le Coq A.-M."/>
            <person name="Dudez A.-M."/>
            <person name="Martin V."/>
            <person name="Beaufils S."/>
            <person name="Darbon-Rongere E."/>
            <person name="Bossy R."/>
            <person name="Loux V."/>
            <person name="Zagorec M."/>
        </authorList>
    </citation>
    <scope>NUCLEOTIDE SEQUENCE [LARGE SCALE GENOMIC DNA]</scope>
    <source>
        <strain>23K</strain>
    </source>
</reference>
<gene>
    <name evidence="1" type="primary">rplT</name>
    <name type="ordered locus">LCA_1396</name>
</gene>
<proteinExistence type="inferred from homology"/>
<dbReference type="EMBL" id="CR936503">
    <property type="protein sequence ID" value="CAI55699.1"/>
    <property type="molecule type" value="Genomic_DNA"/>
</dbReference>
<dbReference type="RefSeq" id="WP_011375090.1">
    <property type="nucleotide sequence ID" value="NC_007576.1"/>
</dbReference>
<dbReference type="SMR" id="Q38VT4"/>
<dbReference type="STRING" id="314315.LCA_1396"/>
<dbReference type="GeneID" id="57132308"/>
<dbReference type="KEGG" id="lsa:LCA_1396"/>
<dbReference type="eggNOG" id="COG0292">
    <property type="taxonomic scope" value="Bacteria"/>
</dbReference>
<dbReference type="HOGENOM" id="CLU_123265_0_1_9"/>
<dbReference type="OrthoDB" id="9808966at2"/>
<dbReference type="Proteomes" id="UP000002707">
    <property type="component" value="Chromosome"/>
</dbReference>
<dbReference type="GO" id="GO:1990904">
    <property type="term" value="C:ribonucleoprotein complex"/>
    <property type="evidence" value="ECO:0007669"/>
    <property type="project" value="UniProtKB-KW"/>
</dbReference>
<dbReference type="GO" id="GO:0005840">
    <property type="term" value="C:ribosome"/>
    <property type="evidence" value="ECO:0007669"/>
    <property type="project" value="UniProtKB-KW"/>
</dbReference>
<dbReference type="GO" id="GO:0019843">
    <property type="term" value="F:rRNA binding"/>
    <property type="evidence" value="ECO:0007669"/>
    <property type="project" value="UniProtKB-UniRule"/>
</dbReference>
<dbReference type="GO" id="GO:0003735">
    <property type="term" value="F:structural constituent of ribosome"/>
    <property type="evidence" value="ECO:0007669"/>
    <property type="project" value="InterPro"/>
</dbReference>
<dbReference type="GO" id="GO:0000027">
    <property type="term" value="P:ribosomal large subunit assembly"/>
    <property type="evidence" value="ECO:0007669"/>
    <property type="project" value="UniProtKB-UniRule"/>
</dbReference>
<dbReference type="GO" id="GO:0006412">
    <property type="term" value="P:translation"/>
    <property type="evidence" value="ECO:0007669"/>
    <property type="project" value="InterPro"/>
</dbReference>
<dbReference type="CDD" id="cd07026">
    <property type="entry name" value="Ribosomal_L20"/>
    <property type="match status" value="1"/>
</dbReference>
<dbReference type="FunFam" id="1.10.1900.20:FF:000001">
    <property type="entry name" value="50S ribosomal protein L20"/>
    <property type="match status" value="1"/>
</dbReference>
<dbReference type="Gene3D" id="6.10.160.10">
    <property type="match status" value="1"/>
</dbReference>
<dbReference type="Gene3D" id="1.10.1900.20">
    <property type="entry name" value="Ribosomal protein L20"/>
    <property type="match status" value="1"/>
</dbReference>
<dbReference type="HAMAP" id="MF_00382">
    <property type="entry name" value="Ribosomal_bL20"/>
    <property type="match status" value="1"/>
</dbReference>
<dbReference type="InterPro" id="IPR005813">
    <property type="entry name" value="Ribosomal_bL20"/>
</dbReference>
<dbReference type="InterPro" id="IPR049946">
    <property type="entry name" value="RIBOSOMAL_L20_CS"/>
</dbReference>
<dbReference type="InterPro" id="IPR035566">
    <property type="entry name" value="Ribosomal_protein_bL20_C"/>
</dbReference>
<dbReference type="NCBIfam" id="TIGR01032">
    <property type="entry name" value="rplT_bact"/>
    <property type="match status" value="1"/>
</dbReference>
<dbReference type="PANTHER" id="PTHR10986">
    <property type="entry name" value="39S RIBOSOMAL PROTEIN L20"/>
    <property type="match status" value="1"/>
</dbReference>
<dbReference type="Pfam" id="PF00453">
    <property type="entry name" value="Ribosomal_L20"/>
    <property type="match status" value="1"/>
</dbReference>
<dbReference type="PRINTS" id="PR00062">
    <property type="entry name" value="RIBOSOMALL20"/>
</dbReference>
<dbReference type="SUPFAM" id="SSF74731">
    <property type="entry name" value="Ribosomal protein L20"/>
    <property type="match status" value="1"/>
</dbReference>
<dbReference type="PROSITE" id="PS00937">
    <property type="entry name" value="RIBOSOMAL_L20"/>
    <property type="match status" value="1"/>
</dbReference>
<accession>Q38VT4</accession>
<name>RL20_LATSS</name>
<evidence type="ECO:0000255" key="1">
    <source>
        <dbReference type="HAMAP-Rule" id="MF_00382"/>
    </source>
</evidence>
<evidence type="ECO:0000305" key="2"/>
<comment type="function">
    <text evidence="1">Binds directly to 23S ribosomal RNA and is necessary for the in vitro assembly process of the 50S ribosomal subunit. It is not involved in the protein synthesizing functions of that subunit.</text>
</comment>
<comment type="similarity">
    <text evidence="1">Belongs to the bacterial ribosomal protein bL20 family.</text>
</comment>
<feature type="chain" id="PRO_0000243693" description="Large ribosomal subunit protein bL20">
    <location>
        <begin position="1"/>
        <end position="119"/>
    </location>
</feature>
<protein>
    <recommendedName>
        <fullName evidence="1">Large ribosomal subunit protein bL20</fullName>
    </recommendedName>
    <alternativeName>
        <fullName evidence="2">50S ribosomal protein L20</fullName>
    </alternativeName>
</protein>
<keyword id="KW-1185">Reference proteome</keyword>
<keyword id="KW-0687">Ribonucleoprotein</keyword>
<keyword id="KW-0689">Ribosomal protein</keyword>
<keyword id="KW-0694">RNA-binding</keyword>
<keyword id="KW-0699">rRNA-binding</keyword>